<comment type="function">
    <text>Plant non-specific lipid-transfer proteins transfer phospholipids as well as galactolipids across membranes. May play a role in wax or cutin deposition in the cell walls of expanding epidermal cells and certain secretory tissues.</text>
</comment>
<comment type="tissue specificity">
    <text>Seeds.</text>
</comment>
<comment type="similarity">
    <text evidence="2">Belongs to the plant LTP family.</text>
</comment>
<comment type="caution">
    <text evidence="2">Was originally (Ref.1) thought to be an inhibitor of alpha-amylase.</text>
</comment>
<organism>
    <name type="scientific">Eleusine coracana</name>
    <name type="common">Indian finger millet</name>
    <name type="synonym">Ragi</name>
    <dbReference type="NCBI Taxonomy" id="4511"/>
    <lineage>
        <taxon>Eukaryota</taxon>
        <taxon>Viridiplantae</taxon>
        <taxon>Streptophyta</taxon>
        <taxon>Embryophyta</taxon>
        <taxon>Tracheophyta</taxon>
        <taxon>Spermatophyta</taxon>
        <taxon>Magnoliopsida</taxon>
        <taxon>Liliopsida</taxon>
        <taxon>Poales</taxon>
        <taxon>Poaceae</taxon>
        <taxon>PACMAD clade</taxon>
        <taxon>Chloridoideae</taxon>
        <taxon>Cynodonteae</taxon>
        <taxon>Eleusininae</taxon>
        <taxon>Eleusine</taxon>
    </lineage>
</organism>
<name>NLTP_ELECO</name>
<sequence>AISCGQVSSAIGPCLAYARGAGAAPSASCQSGVRSLNAAARTTADRRAACNCSLKSAASRVSGLNAGKASSIPGRCGVRLPYAISASIDCSRVNN</sequence>
<evidence type="ECO:0000250" key="1"/>
<evidence type="ECO:0000305" key="2"/>
<feature type="chain" id="PRO_0000153872" description="Non-specific lipid-transfer protein">
    <location>
        <begin position="1"/>
        <end position="95"/>
    </location>
</feature>
<feature type="disulfide bond" evidence="1">
    <location>
        <begin position="4"/>
        <end position="52"/>
    </location>
</feature>
<feature type="disulfide bond" evidence="1">
    <location>
        <begin position="14"/>
        <end position="29"/>
    </location>
</feature>
<feature type="disulfide bond" evidence="1">
    <location>
        <begin position="50"/>
        <end position="90"/>
    </location>
</feature>
<proteinExistence type="evidence at protein level"/>
<accession>P23802</accession>
<keyword id="KW-0903">Direct protein sequencing</keyword>
<keyword id="KW-1015">Disulfide bond</keyword>
<keyword id="KW-0446">Lipid-binding</keyword>
<keyword id="KW-0813">Transport</keyword>
<dbReference type="PIR" id="S28988">
    <property type="entry name" value="S28988"/>
</dbReference>
<dbReference type="SMR" id="P23802"/>
<dbReference type="GO" id="GO:0008289">
    <property type="term" value="F:lipid binding"/>
    <property type="evidence" value="ECO:0007669"/>
    <property type="project" value="UniProtKB-KW"/>
</dbReference>
<dbReference type="GO" id="GO:0006869">
    <property type="term" value="P:lipid transport"/>
    <property type="evidence" value="ECO:0007669"/>
    <property type="project" value="InterPro"/>
</dbReference>
<dbReference type="CDD" id="cd01960">
    <property type="entry name" value="nsLTP1"/>
    <property type="match status" value="1"/>
</dbReference>
<dbReference type="Gene3D" id="1.10.110.10">
    <property type="entry name" value="Plant lipid-transfer and hydrophobic proteins"/>
    <property type="match status" value="1"/>
</dbReference>
<dbReference type="InterPro" id="IPR036312">
    <property type="entry name" value="Bifun_inhib/LTP/seed_sf"/>
</dbReference>
<dbReference type="InterPro" id="IPR016140">
    <property type="entry name" value="Bifunc_inhib/LTP/seed_store"/>
</dbReference>
<dbReference type="InterPro" id="IPR000528">
    <property type="entry name" value="Plant_nsLTP"/>
</dbReference>
<dbReference type="PANTHER" id="PTHR33076">
    <property type="entry name" value="NON-SPECIFIC LIPID-TRANSFER PROTEIN 2-RELATED"/>
    <property type="match status" value="1"/>
</dbReference>
<dbReference type="Pfam" id="PF00234">
    <property type="entry name" value="Tryp_alpha_amyl"/>
    <property type="match status" value="1"/>
</dbReference>
<dbReference type="PRINTS" id="PR00382">
    <property type="entry name" value="LIPIDTRNSFER"/>
</dbReference>
<dbReference type="SMART" id="SM00499">
    <property type="entry name" value="AAI"/>
    <property type="match status" value="1"/>
</dbReference>
<dbReference type="SUPFAM" id="SSF47699">
    <property type="entry name" value="Bifunctional inhibitor/lipid-transfer protein/seed storage 2S albumin"/>
    <property type="match status" value="1"/>
</dbReference>
<dbReference type="PROSITE" id="PS00597">
    <property type="entry name" value="PLANT_LTP"/>
    <property type="match status" value="1"/>
</dbReference>
<reference key="1">
    <citation type="journal article" date="1984" name="FEBS Lett.">
        <title>The complete amino acid sequence of the alpha-amylase inhibitor I-2 from seeds of ragi (Indian finger millet, Eleusine coracana Gaertn.).</title>
        <authorList>
            <person name="Campos F.A.P."/>
            <person name="Richardson M."/>
        </authorList>
    </citation>
    <scope>PROTEIN SEQUENCE</scope>
    <source>
        <tissue>Seed</tissue>
    </source>
</reference>
<reference key="2">
    <citation type="journal article" date="1989" name="Arch. Biochem. Biophys.">
        <title>Coidentity of putative amylase inhibitors from barley and finger millet with phospholipid transfer proteins inferred from amino acid sequence homology.</title>
        <authorList>
            <person name="Bernhard W.R."/>
            <person name="Somerville C.R."/>
        </authorList>
    </citation>
    <scope>IDENTIFICATION AS A LTP</scope>
</reference>
<protein>
    <recommendedName>
        <fullName>Non-specific lipid-transfer protein</fullName>
        <shortName>LTP</shortName>
    </recommendedName>
    <alternativeName>
        <fullName>Alpha-amylase inhibitor I-2</fullName>
    </alternativeName>
</protein>